<organism>
    <name type="scientific">Sarcophaga peregrina</name>
    <name type="common">Flesh fly</name>
    <name type="synonym">Boettcherisca peregrina</name>
    <dbReference type="NCBI Taxonomy" id="7386"/>
    <lineage>
        <taxon>Eukaryota</taxon>
        <taxon>Metazoa</taxon>
        <taxon>Ecdysozoa</taxon>
        <taxon>Arthropoda</taxon>
        <taxon>Hexapoda</taxon>
        <taxon>Insecta</taxon>
        <taxon>Pterygota</taxon>
        <taxon>Neoptera</taxon>
        <taxon>Endopterygota</taxon>
        <taxon>Diptera</taxon>
        <taxon>Brachycera</taxon>
        <taxon>Muscomorpha</taxon>
        <taxon>Oestroidea</taxon>
        <taxon>Sarcophagidae</taxon>
        <taxon>Sarcophaga</taxon>
        <taxon>Boettcherisca</taxon>
    </lineage>
</organism>
<accession>Q26636</accession>
<comment type="function">
    <text evidence="6">Important for the overall degradation of proteins in lysosomes. Required for differentiation of imaginal disks.</text>
</comment>
<comment type="catalytic activity">
    <reaction>
        <text>Specificity close to that of papain. As compared to cathepsin B, cathepsin L exhibits higher activity toward protein substrates, but has little activity on Z-Arg-Arg-NHMec, and no peptidyl-dipeptidase activity.</text>
        <dbReference type="EC" id="3.4.22.15"/>
    </reaction>
</comment>
<comment type="subunit">
    <text evidence="1">Dimer of a heavy and a light chain linked by disulfide bonds.</text>
</comment>
<comment type="subcellular location">
    <subcellularLocation>
        <location evidence="6">Lysosome</location>
    </subcellularLocation>
</comment>
<comment type="developmental stage">
    <text evidence="6">Highly expressed during embryonic development with higher levels in first instar than in third instar.</text>
</comment>
<comment type="similarity">
    <text evidence="3 4 5">Belongs to the peptidase C1 family.</text>
</comment>
<sequence>MRTVLVALLALVALTQAISPLDLIKEEWHTYKLQHRKNYANEVEERFRMKIFNENRHKIAKHNQLFAQGKVSYKLGLNKYADMLHHEFKETMNGYNHTLRQLMRERTGLVGATYIPPAHVTVPKSVDWREHGAVTGVKDQGHCGSCWAFSSTGALEGQHFRKAGVLVSLSEQNLVDCSTKYGNNGCNGGLMDNAFRYIKDNGGIDTEKSYPYEGIDDSCHFNKATIGATDTGFVDIPEGDEEKMKKAVATMGPVSVAIDASHESFQLYSEGVYNEPECDEQNLDHGVLVVGYGTDESGMDYWLVKNSWGTTWGEQGYIKMARNQNNQCGIATASSYPTV</sequence>
<evidence type="ECO:0000250" key="1"/>
<evidence type="ECO:0000255" key="2"/>
<evidence type="ECO:0000255" key="3">
    <source>
        <dbReference type="PROSITE-ProRule" id="PRU10088"/>
    </source>
</evidence>
<evidence type="ECO:0000255" key="4">
    <source>
        <dbReference type="PROSITE-ProRule" id="PRU10089"/>
    </source>
</evidence>
<evidence type="ECO:0000255" key="5">
    <source>
        <dbReference type="PROSITE-ProRule" id="PRU10090"/>
    </source>
</evidence>
<evidence type="ECO:0000269" key="6">
    <source>
    </source>
</evidence>
<dbReference type="EC" id="3.4.22.15"/>
<dbReference type="EMBL" id="D16533">
    <property type="protein sequence ID" value="BAA03970.1"/>
    <property type="molecule type" value="mRNA"/>
</dbReference>
<dbReference type="PIR" id="A53810">
    <property type="entry name" value="A53810"/>
</dbReference>
<dbReference type="SMR" id="Q26636"/>
<dbReference type="MEROPS" id="C01.092"/>
<dbReference type="GO" id="GO:0005764">
    <property type="term" value="C:lysosome"/>
    <property type="evidence" value="ECO:0007669"/>
    <property type="project" value="UniProtKB-SubCell"/>
</dbReference>
<dbReference type="GO" id="GO:0004197">
    <property type="term" value="F:cysteine-type endopeptidase activity"/>
    <property type="evidence" value="ECO:0007669"/>
    <property type="project" value="UniProtKB-EC"/>
</dbReference>
<dbReference type="GO" id="GO:0030154">
    <property type="term" value="P:cell differentiation"/>
    <property type="evidence" value="ECO:0007669"/>
    <property type="project" value="UniProtKB-KW"/>
</dbReference>
<dbReference type="GO" id="GO:0006508">
    <property type="term" value="P:proteolysis"/>
    <property type="evidence" value="ECO:0007669"/>
    <property type="project" value="UniProtKB-KW"/>
</dbReference>
<dbReference type="CDD" id="cd02248">
    <property type="entry name" value="Peptidase_C1A"/>
    <property type="match status" value="1"/>
</dbReference>
<dbReference type="FunFam" id="3.90.70.10:FF:000006">
    <property type="entry name" value="Cathepsin S"/>
    <property type="match status" value="1"/>
</dbReference>
<dbReference type="Gene3D" id="3.90.70.10">
    <property type="entry name" value="Cysteine proteinases"/>
    <property type="match status" value="1"/>
</dbReference>
<dbReference type="InterPro" id="IPR038765">
    <property type="entry name" value="Papain-like_cys_pep_sf"/>
</dbReference>
<dbReference type="InterPro" id="IPR025661">
    <property type="entry name" value="Pept_asp_AS"/>
</dbReference>
<dbReference type="InterPro" id="IPR000169">
    <property type="entry name" value="Pept_cys_AS"/>
</dbReference>
<dbReference type="InterPro" id="IPR025660">
    <property type="entry name" value="Pept_his_AS"/>
</dbReference>
<dbReference type="InterPro" id="IPR013128">
    <property type="entry name" value="Peptidase_C1A"/>
</dbReference>
<dbReference type="InterPro" id="IPR000668">
    <property type="entry name" value="Peptidase_C1A_C"/>
</dbReference>
<dbReference type="InterPro" id="IPR039417">
    <property type="entry name" value="Peptidase_C1A_papain-like"/>
</dbReference>
<dbReference type="InterPro" id="IPR013201">
    <property type="entry name" value="Prot_inhib_I29"/>
</dbReference>
<dbReference type="PANTHER" id="PTHR12411">
    <property type="entry name" value="CYSTEINE PROTEASE FAMILY C1-RELATED"/>
    <property type="match status" value="1"/>
</dbReference>
<dbReference type="Pfam" id="PF08246">
    <property type="entry name" value="Inhibitor_I29"/>
    <property type="match status" value="1"/>
</dbReference>
<dbReference type="Pfam" id="PF00112">
    <property type="entry name" value="Peptidase_C1"/>
    <property type="match status" value="1"/>
</dbReference>
<dbReference type="PRINTS" id="PR00705">
    <property type="entry name" value="PAPAIN"/>
</dbReference>
<dbReference type="SMART" id="SM00848">
    <property type="entry name" value="Inhibitor_I29"/>
    <property type="match status" value="1"/>
</dbReference>
<dbReference type="SMART" id="SM00645">
    <property type="entry name" value="Pept_C1"/>
    <property type="match status" value="1"/>
</dbReference>
<dbReference type="SUPFAM" id="SSF54001">
    <property type="entry name" value="Cysteine proteinases"/>
    <property type="match status" value="1"/>
</dbReference>
<dbReference type="PROSITE" id="PS00640">
    <property type="entry name" value="THIOL_PROTEASE_ASN"/>
    <property type="match status" value="1"/>
</dbReference>
<dbReference type="PROSITE" id="PS00139">
    <property type="entry name" value="THIOL_PROTEASE_CYS"/>
    <property type="match status" value="1"/>
</dbReference>
<dbReference type="PROSITE" id="PS00639">
    <property type="entry name" value="THIOL_PROTEASE_HIS"/>
    <property type="match status" value="1"/>
</dbReference>
<keyword id="KW-0217">Developmental protein</keyword>
<keyword id="KW-0221">Differentiation</keyword>
<keyword id="KW-0903">Direct protein sequencing</keyword>
<keyword id="KW-1015">Disulfide bond</keyword>
<keyword id="KW-0325">Glycoprotein</keyword>
<keyword id="KW-0378">Hydrolase</keyword>
<keyword id="KW-0458">Lysosome</keyword>
<keyword id="KW-0645">Protease</keyword>
<keyword id="KW-0732">Signal</keyword>
<keyword id="KW-0788">Thiol protease</keyword>
<keyword id="KW-0865">Zymogen</keyword>
<feature type="signal peptide" evidence="6">
    <location>
        <begin position="1"/>
        <end position="17"/>
    </location>
</feature>
<feature type="propeptide" id="PRO_0000026269" description="Activation peptide" evidence="6">
    <location>
        <begin position="18"/>
        <end position="121"/>
    </location>
</feature>
<feature type="chain" id="PRO_0000026270" description="Cathepsin L heavy chain">
    <location>
        <begin position="122"/>
        <end position="294"/>
    </location>
</feature>
<feature type="propeptide" id="PRO_0000026271" evidence="1">
    <location>
        <begin position="295"/>
        <end position="298"/>
    </location>
</feature>
<feature type="chain" id="PRO_0000026272" description="Cathepsin L light chain">
    <location>
        <begin position="299"/>
        <end position="339"/>
    </location>
</feature>
<feature type="active site" evidence="1">
    <location>
        <position position="146"/>
    </location>
</feature>
<feature type="active site" evidence="1">
    <location>
        <position position="285"/>
    </location>
</feature>
<feature type="active site" evidence="1">
    <location>
        <position position="306"/>
    </location>
</feature>
<feature type="glycosylation site" description="N-linked (GlcNAc...) asparagine" evidence="2">
    <location>
        <position position="96"/>
    </location>
</feature>
<feature type="disulfide bond" evidence="1">
    <location>
        <begin position="143"/>
        <end position="186"/>
    </location>
</feature>
<feature type="disulfide bond" evidence="1">
    <location>
        <begin position="177"/>
        <end position="219"/>
    </location>
</feature>
<feature type="disulfide bond" description="Interchain (between heavy and light chains)" evidence="1">
    <location>
        <begin position="278"/>
        <end position="328"/>
    </location>
</feature>
<name>CATL_SARPE</name>
<reference key="1">
    <citation type="journal article" date="1994" name="J. Biol. Chem.">
        <title>Purification, characterization, and cDNA cloning of procathepsin L from the culture medium of NIH-Sape-4, an embryonic cell line of Sarcophaga peregrina (flesh fly), and its involvement in the differentiation of imaginal discs.</title>
        <authorList>
            <person name="Homma K."/>
            <person name="Kurata S."/>
            <person name="Natori S."/>
        </authorList>
    </citation>
    <scope>NUCLEOTIDE SEQUENCE [MRNA]</scope>
    <scope>PROTEIN SEQUENCE OF 18-27; 122-135; 139-154; 200-208; 224-239 AND 306-319</scope>
    <scope>FUNCTION</scope>
    <scope>SUBCELLULAR LOCATION</scope>
    <scope>DEVELOPMENTAL STAGE</scope>
</reference>
<protein>
    <recommendedName>
        <fullName>Cathepsin L</fullName>
        <ecNumber>3.4.22.15</ecNumber>
    </recommendedName>
    <component>
        <recommendedName>
            <fullName>Cathepsin L heavy chain</fullName>
        </recommendedName>
    </component>
    <component>
        <recommendedName>
            <fullName>Cathepsin L light chain</fullName>
        </recommendedName>
    </component>
</protein>
<proteinExistence type="evidence at protein level"/>